<comment type="function">
    <text evidence="1">FMRFamides and FMRFamide-like peptides are neuropeptides.</text>
</comment>
<comment type="subcellular location">
    <subcellularLocation>
        <location evidence="2">Secreted</location>
    </subcellularLocation>
</comment>
<comment type="tissue specificity">
    <text evidence="4">Expressed in the CNS but not in the ring gland, midgut, thoracic perisymapthetic organs (tPSO) or abdominal perisymapthetic organs (aPSO) (at protein level).</text>
</comment>
<comment type="developmental stage">
    <text evidence="4">Detected in larvae.</text>
</comment>
<comment type="mass spectrometry"/>
<comment type="similarity">
    <text evidence="3">Belongs to the FARP (FMRFamide related peptide) family.</text>
</comment>
<protein>
    <recommendedName>
        <fullName evidence="5">FMRFamide-like neuropeptide GDNFMRF-amide</fullName>
    </recommendedName>
</protein>
<evidence type="ECO:0000250" key="1">
    <source>
        <dbReference type="UniProtKB" id="P41855"/>
    </source>
</evidence>
<evidence type="ECO:0000250" key="2">
    <source>
        <dbReference type="UniProtKB" id="P85467"/>
    </source>
</evidence>
<evidence type="ECO:0000255" key="3"/>
<evidence type="ECO:0000269" key="4">
    <source>
    </source>
</evidence>
<evidence type="ECO:0000303" key="5">
    <source>
    </source>
</evidence>
<evidence type="ECO:0000305" key="6"/>
<organism>
    <name type="scientific">Delia radicum</name>
    <name type="common">Cabbage root fly</name>
    <name type="synonym">Anthomyia brassicae</name>
    <dbReference type="NCBI Taxonomy" id="30064"/>
    <lineage>
        <taxon>Eukaryota</taxon>
        <taxon>Metazoa</taxon>
        <taxon>Ecdysozoa</taxon>
        <taxon>Arthropoda</taxon>
        <taxon>Hexapoda</taxon>
        <taxon>Insecta</taxon>
        <taxon>Pterygota</taxon>
        <taxon>Neoptera</taxon>
        <taxon>Endopterygota</taxon>
        <taxon>Diptera</taxon>
        <taxon>Brachycera</taxon>
        <taxon>Muscomorpha</taxon>
        <taxon>Muscoidea</taxon>
        <taxon>Anthomyiidae</taxon>
        <taxon>Anthomyiinae</taxon>
        <taxon>Delia</taxon>
    </lineage>
</organism>
<keyword id="KW-0027">Amidation</keyword>
<keyword id="KW-0903">Direct protein sequencing</keyword>
<keyword id="KW-0527">Neuropeptide</keyword>
<keyword id="KW-0964">Secreted</keyword>
<proteinExistence type="evidence at protein level"/>
<accession>B3EWJ7</accession>
<sequence>GDNFMRF</sequence>
<name>FAR1_DELRA</name>
<dbReference type="GO" id="GO:0005576">
    <property type="term" value="C:extracellular region"/>
    <property type="evidence" value="ECO:0007669"/>
    <property type="project" value="UniProtKB-SubCell"/>
</dbReference>
<dbReference type="GO" id="GO:0007218">
    <property type="term" value="P:neuropeptide signaling pathway"/>
    <property type="evidence" value="ECO:0007669"/>
    <property type="project" value="UniProtKB-KW"/>
</dbReference>
<feature type="peptide" id="PRO_0000419701" description="FMRFamide-like neuropeptide GDNFMRF-amide" evidence="4">
    <location>
        <begin position="1"/>
        <end position="7"/>
    </location>
</feature>
<feature type="modified residue" description="Phenylalanine amide" evidence="4">
    <location>
        <position position="7"/>
    </location>
</feature>
<reference evidence="6" key="1">
    <citation type="journal article" date="2012" name="PLoS ONE">
        <title>Peptidomics of the agriculturally damaging larval stage of the cabbage root fly Delia radicum (Diptera: Anthomyiidae).</title>
        <authorList>
            <person name="Zoephel J."/>
            <person name="Reiher W."/>
            <person name="Rexer K.-H."/>
            <person name="Kahnt J."/>
            <person name="Wegener C."/>
        </authorList>
    </citation>
    <scope>PROTEIN SEQUENCE</scope>
    <scope>TISSUE SPECIFICITY</scope>
    <scope>DEVELOPMENTAL STAGE</scope>
    <scope>MASS SPECTROMETRY</scope>
    <scope>AMIDATION AT PHE-7</scope>
    <source>
        <tissue evidence="4">CNS</tissue>
    </source>
</reference>